<sequence>MRGGGNMQQMMKQMQKMQKKMAQEQEKLKEERIVGTAGGGMVAVTVTGHKEVVDVEIKEEAVDPDDIEMLQDLVLAATNEAMNKADELTQERLGKHTQGLNIPGM</sequence>
<protein>
    <recommendedName>
        <fullName evidence="1">Nucleoid-associated protein USA300HOU_0478</fullName>
    </recommendedName>
</protein>
<name>Y478_STAAT</name>
<gene>
    <name type="ordered locus">USA300HOU_0478</name>
</gene>
<feature type="chain" id="PRO_1000078777" description="Nucleoid-associated protein USA300HOU_0478">
    <location>
        <begin position="1"/>
        <end position="105"/>
    </location>
</feature>
<feature type="region of interest" description="Disordered" evidence="2">
    <location>
        <begin position="1"/>
        <end position="33"/>
    </location>
</feature>
<feature type="compositionally biased region" description="Low complexity" evidence="2">
    <location>
        <begin position="7"/>
        <end position="16"/>
    </location>
</feature>
<feature type="compositionally biased region" description="Basic and acidic residues" evidence="2">
    <location>
        <begin position="21"/>
        <end position="33"/>
    </location>
</feature>
<organism>
    <name type="scientific">Staphylococcus aureus (strain USA300 / TCH1516)</name>
    <dbReference type="NCBI Taxonomy" id="451516"/>
    <lineage>
        <taxon>Bacteria</taxon>
        <taxon>Bacillati</taxon>
        <taxon>Bacillota</taxon>
        <taxon>Bacilli</taxon>
        <taxon>Bacillales</taxon>
        <taxon>Staphylococcaceae</taxon>
        <taxon>Staphylococcus</taxon>
    </lineage>
</organism>
<evidence type="ECO:0000255" key="1">
    <source>
        <dbReference type="HAMAP-Rule" id="MF_00274"/>
    </source>
</evidence>
<evidence type="ECO:0000256" key="2">
    <source>
        <dbReference type="SAM" id="MobiDB-lite"/>
    </source>
</evidence>
<proteinExistence type="inferred from homology"/>
<reference key="1">
    <citation type="journal article" date="2007" name="BMC Microbiol.">
        <title>Subtle genetic changes enhance virulence of methicillin resistant and sensitive Staphylococcus aureus.</title>
        <authorList>
            <person name="Highlander S.K."/>
            <person name="Hulten K.G."/>
            <person name="Qin X."/>
            <person name="Jiang H."/>
            <person name="Yerrapragada S."/>
            <person name="Mason E.O. Jr."/>
            <person name="Shang Y."/>
            <person name="Williams T.M."/>
            <person name="Fortunov R.M."/>
            <person name="Liu Y."/>
            <person name="Igboeli O."/>
            <person name="Petrosino J."/>
            <person name="Tirumalai M."/>
            <person name="Uzman A."/>
            <person name="Fox G.E."/>
            <person name="Cardenas A.M."/>
            <person name="Muzny D.M."/>
            <person name="Hemphill L."/>
            <person name="Ding Y."/>
            <person name="Dugan S."/>
            <person name="Blyth P.R."/>
            <person name="Buhay C.J."/>
            <person name="Dinh H.H."/>
            <person name="Hawes A.C."/>
            <person name="Holder M."/>
            <person name="Kovar C.L."/>
            <person name="Lee S.L."/>
            <person name="Liu W."/>
            <person name="Nazareth L.V."/>
            <person name="Wang Q."/>
            <person name="Zhou J."/>
            <person name="Kaplan S.L."/>
            <person name="Weinstock G.M."/>
        </authorList>
    </citation>
    <scope>NUCLEOTIDE SEQUENCE [LARGE SCALE GENOMIC DNA]</scope>
    <source>
        <strain>USA300 / TCH1516</strain>
    </source>
</reference>
<accession>A8Z0X3</accession>
<keyword id="KW-0963">Cytoplasm</keyword>
<keyword id="KW-0238">DNA-binding</keyword>
<dbReference type="EMBL" id="CP000730">
    <property type="protein sequence ID" value="ABX28504.1"/>
    <property type="molecule type" value="Genomic_DNA"/>
</dbReference>
<dbReference type="RefSeq" id="WP_001213992.1">
    <property type="nucleotide sequence ID" value="NC_010079.1"/>
</dbReference>
<dbReference type="SMR" id="A8Z0X3"/>
<dbReference type="KEGG" id="sax:USA300HOU_0478"/>
<dbReference type="HOGENOM" id="CLU_140930_1_0_9"/>
<dbReference type="BioCyc" id="SAUR451516-HMP:GTV5-480-MONOMER"/>
<dbReference type="GO" id="GO:0043590">
    <property type="term" value="C:bacterial nucleoid"/>
    <property type="evidence" value="ECO:0007669"/>
    <property type="project" value="UniProtKB-UniRule"/>
</dbReference>
<dbReference type="GO" id="GO:0005829">
    <property type="term" value="C:cytosol"/>
    <property type="evidence" value="ECO:0007669"/>
    <property type="project" value="TreeGrafter"/>
</dbReference>
<dbReference type="GO" id="GO:0003677">
    <property type="term" value="F:DNA binding"/>
    <property type="evidence" value="ECO:0007669"/>
    <property type="project" value="UniProtKB-UniRule"/>
</dbReference>
<dbReference type="FunFam" id="3.30.1310.10:FF:000002">
    <property type="entry name" value="Nucleoid-associated protein IKC_06587"/>
    <property type="match status" value="1"/>
</dbReference>
<dbReference type="Gene3D" id="3.30.1310.10">
    <property type="entry name" value="Nucleoid-associated protein YbaB-like domain"/>
    <property type="match status" value="1"/>
</dbReference>
<dbReference type="HAMAP" id="MF_00274">
    <property type="entry name" value="DNA_YbaB_EbfC"/>
    <property type="match status" value="1"/>
</dbReference>
<dbReference type="InterPro" id="IPR036894">
    <property type="entry name" value="YbaB-like_sf"/>
</dbReference>
<dbReference type="InterPro" id="IPR004401">
    <property type="entry name" value="YbaB/EbfC"/>
</dbReference>
<dbReference type="NCBIfam" id="TIGR00103">
    <property type="entry name" value="DNA_YbaB_EbfC"/>
    <property type="match status" value="1"/>
</dbReference>
<dbReference type="PANTHER" id="PTHR33449">
    <property type="entry name" value="NUCLEOID-ASSOCIATED PROTEIN YBAB"/>
    <property type="match status" value="1"/>
</dbReference>
<dbReference type="PANTHER" id="PTHR33449:SF1">
    <property type="entry name" value="NUCLEOID-ASSOCIATED PROTEIN YBAB"/>
    <property type="match status" value="1"/>
</dbReference>
<dbReference type="Pfam" id="PF02575">
    <property type="entry name" value="YbaB_DNA_bd"/>
    <property type="match status" value="1"/>
</dbReference>
<dbReference type="PIRSF" id="PIRSF004555">
    <property type="entry name" value="UCP004555"/>
    <property type="match status" value="1"/>
</dbReference>
<dbReference type="SUPFAM" id="SSF82607">
    <property type="entry name" value="YbaB-like"/>
    <property type="match status" value="1"/>
</dbReference>
<comment type="function">
    <text evidence="1">Binds to DNA and alters its conformation. May be involved in regulation of gene expression, nucleoid organization and DNA protection.</text>
</comment>
<comment type="subunit">
    <text evidence="1">Homodimer.</text>
</comment>
<comment type="subcellular location">
    <subcellularLocation>
        <location evidence="1">Cytoplasm</location>
        <location evidence="1">Nucleoid</location>
    </subcellularLocation>
</comment>
<comment type="similarity">
    <text evidence="1">Belongs to the YbaB/EbfC family.</text>
</comment>